<gene>
    <name evidence="1" type="primary">trpR</name>
    <name type="ordered locus">SPA4393</name>
</gene>
<organism>
    <name type="scientific">Salmonella paratyphi A (strain ATCC 9150 / SARB42)</name>
    <dbReference type="NCBI Taxonomy" id="295319"/>
    <lineage>
        <taxon>Bacteria</taxon>
        <taxon>Pseudomonadati</taxon>
        <taxon>Pseudomonadota</taxon>
        <taxon>Gammaproteobacteria</taxon>
        <taxon>Enterobacterales</taxon>
        <taxon>Enterobacteriaceae</taxon>
        <taxon>Salmonella</taxon>
    </lineage>
</organism>
<feature type="chain" id="PRO_0000196501" description="Trp operon repressor">
    <location>
        <begin position="1"/>
        <end position="108"/>
    </location>
</feature>
<feature type="DNA-binding region" evidence="1">
    <location>
        <begin position="68"/>
        <end position="91"/>
    </location>
</feature>
<sequence>MTQHSPYSSAIAEQRNQEWLRFVELLRQAYAEDLHLPLLQLMLTPDEREALGTRVRIIEELLRGEMSQRELKTELGAGIATITRGSNSLKSAPVELRHWLEQILLKSA</sequence>
<keyword id="KW-0963">Cytoplasm</keyword>
<keyword id="KW-0238">DNA-binding</keyword>
<keyword id="KW-0678">Repressor</keyword>
<keyword id="KW-0804">Transcription</keyword>
<keyword id="KW-0805">Transcription regulation</keyword>
<accession>Q5PK31</accession>
<protein>
    <recommendedName>
        <fullName evidence="1">Trp operon repressor</fullName>
    </recommendedName>
</protein>
<dbReference type="EMBL" id="CP000026">
    <property type="protein sequence ID" value="AAV80116.1"/>
    <property type="molecule type" value="Genomic_DNA"/>
</dbReference>
<dbReference type="RefSeq" id="WP_000192005.1">
    <property type="nucleotide sequence ID" value="NC_006511.1"/>
</dbReference>
<dbReference type="SMR" id="Q5PK31"/>
<dbReference type="KEGG" id="spt:SPA4393"/>
<dbReference type="HOGENOM" id="CLU_147939_0_0_6"/>
<dbReference type="Proteomes" id="UP000008185">
    <property type="component" value="Chromosome"/>
</dbReference>
<dbReference type="GO" id="GO:0005737">
    <property type="term" value="C:cytoplasm"/>
    <property type="evidence" value="ECO:0007669"/>
    <property type="project" value="UniProtKB-SubCell"/>
</dbReference>
<dbReference type="GO" id="GO:0003700">
    <property type="term" value="F:DNA-binding transcription factor activity"/>
    <property type="evidence" value="ECO:0007669"/>
    <property type="project" value="InterPro"/>
</dbReference>
<dbReference type="GO" id="GO:0043565">
    <property type="term" value="F:sequence-specific DNA binding"/>
    <property type="evidence" value="ECO:0007669"/>
    <property type="project" value="InterPro"/>
</dbReference>
<dbReference type="GO" id="GO:0045892">
    <property type="term" value="P:negative regulation of DNA-templated transcription"/>
    <property type="evidence" value="ECO:0007669"/>
    <property type="project" value="UniProtKB-UniRule"/>
</dbReference>
<dbReference type="FunFam" id="1.10.1270.10:FF:000001">
    <property type="entry name" value="Trp operon repressor"/>
    <property type="match status" value="1"/>
</dbReference>
<dbReference type="Gene3D" id="1.10.1270.10">
    <property type="entry name" value="TrpR-like"/>
    <property type="match status" value="1"/>
</dbReference>
<dbReference type="HAMAP" id="MF_00475">
    <property type="entry name" value="Trp_repressor"/>
    <property type="match status" value="1"/>
</dbReference>
<dbReference type="InterPro" id="IPR000831">
    <property type="entry name" value="Trp_repress"/>
</dbReference>
<dbReference type="InterPro" id="IPR013335">
    <property type="entry name" value="Trp_repress_bac"/>
</dbReference>
<dbReference type="InterPro" id="IPR010921">
    <property type="entry name" value="Trp_repressor/repl_initiator"/>
</dbReference>
<dbReference type="InterPro" id="IPR038116">
    <property type="entry name" value="TrpR-like_sf"/>
</dbReference>
<dbReference type="NCBIfam" id="TIGR01321">
    <property type="entry name" value="TrpR"/>
    <property type="match status" value="1"/>
</dbReference>
<dbReference type="PANTHER" id="PTHR38025">
    <property type="entry name" value="TRP OPERON REPRESSOR"/>
    <property type="match status" value="1"/>
</dbReference>
<dbReference type="PANTHER" id="PTHR38025:SF1">
    <property type="entry name" value="TRP OPERON REPRESSOR"/>
    <property type="match status" value="1"/>
</dbReference>
<dbReference type="Pfam" id="PF01371">
    <property type="entry name" value="Trp_repressor"/>
    <property type="match status" value="1"/>
</dbReference>
<dbReference type="PIRSF" id="PIRSF003196">
    <property type="entry name" value="Trp_repressor"/>
    <property type="match status" value="1"/>
</dbReference>
<dbReference type="SUPFAM" id="SSF48295">
    <property type="entry name" value="TrpR-like"/>
    <property type="match status" value="1"/>
</dbReference>
<proteinExistence type="inferred from homology"/>
<reference key="1">
    <citation type="journal article" date="2004" name="Nat. Genet.">
        <title>Comparison of genome degradation in Paratyphi A and Typhi, human-restricted serovars of Salmonella enterica that cause typhoid.</title>
        <authorList>
            <person name="McClelland M."/>
            <person name="Sanderson K.E."/>
            <person name="Clifton S.W."/>
            <person name="Latreille P."/>
            <person name="Porwollik S."/>
            <person name="Sabo A."/>
            <person name="Meyer R."/>
            <person name="Bieri T."/>
            <person name="Ozersky P."/>
            <person name="McLellan M."/>
            <person name="Harkins C.R."/>
            <person name="Wang C."/>
            <person name="Nguyen C."/>
            <person name="Berghoff A."/>
            <person name="Elliott G."/>
            <person name="Kohlberg S."/>
            <person name="Strong C."/>
            <person name="Du F."/>
            <person name="Carter J."/>
            <person name="Kremizki C."/>
            <person name="Layman D."/>
            <person name="Leonard S."/>
            <person name="Sun H."/>
            <person name="Fulton L."/>
            <person name="Nash W."/>
            <person name="Miner T."/>
            <person name="Minx P."/>
            <person name="Delehaunty K."/>
            <person name="Fronick C."/>
            <person name="Magrini V."/>
            <person name="Nhan M."/>
            <person name="Warren W."/>
            <person name="Florea L."/>
            <person name="Spieth J."/>
            <person name="Wilson R.K."/>
        </authorList>
    </citation>
    <scope>NUCLEOTIDE SEQUENCE [LARGE SCALE GENOMIC DNA]</scope>
    <source>
        <strain>ATCC 9150 / SARB42</strain>
    </source>
</reference>
<evidence type="ECO:0000255" key="1">
    <source>
        <dbReference type="HAMAP-Rule" id="MF_00475"/>
    </source>
</evidence>
<comment type="function">
    <text evidence="1">This protein is an aporepressor. When complexed with L-tryptophan it binds the operator region of the trp operon (5'-ACTAGT-'3') and prevents the initiation of transcription. The complex also regulates trp repressor biosynthesis by binding to its regulatory region.</text>
</comment>
<comment type="subunit">
    <text evidence="1">Homodimer.</text>
</comment>
<comment type="subcellular location">
    <subcellularLocation>
        <location evidence="1">Cytoplasm</location>
    </subcellularLocation>
</comment>
<comment type="similarity">
    <text evidence="1">Belongs to the TrpR family.</text>
</comment>
<name>TRPR_SALPA</name>